<dbReference type="EC" id="2.1.1.107" evidence="2"/>
<dbReference type="EMBL" id="M62874">
    <property type="protein sequence ID" value="AAA72997.1"/>
    <property type="molecule type" value="Genomic_DNA"/>
</dbReference>
<dbReference type="PIR" id="A42471">
    <property type="entry name" value="A42471"/>
</dbReference>
<dbReference type="SMR" id="P29564"/>
<dbReference type="BioCyc" id="MetaCyc:MONOMER-12172"/>
<dbReference type="BRENDA" id="2.1.1.107">
    <property type="organism ID" value="13650"/>
</dbReference>
<dbReference type="SABIO-RK" id="P29564"/>
<dbReference type="UniPathway" id="UPA00148">
    <property type="reaction ID" value="UER00211"/>
</dbReference>
<dbReference type="GO" id="GO:0004851">
    <property type="term" value="F:uroporphyrin-III C-methyltransferase activity"/>
    <property type="evidence" value="ECO:0007669"/>
    <property type="project" value="UniProtKB-EC"/>
</dbReference>
<dbReference type="GO" id="GO:0009236">
    <property type="term" value="P:cobalamin biosynthetic process"/>
    <property type="evidence" value="ECO:0007669"/>
    <property type="project" value="UniProtKB-UniPathway"/>
</dbReference>
<dbReference type="GO" id="GO:0032259">
    <property type="term" value="P:methylation"/>
    <property type="evidence" value="ECO:0007669"/>
    <property type="project" value="UniProtKB-KW"/>
</dbReference>
<dbReference type="GO" id="GO:0019354">
    <property type="term" value="P:siroheme biosynthetic process"/>
    <property type="evidence" value="ECO:0007669"/>
    <property type="project" value="InterPro"/>
</dbReference>
<dbReference type="CDD" id="cd11642">
    <property type="entry name" value="SUMT"/>
    <property type="match status" value="1"/>
</dbReference>
<dbReference type="FunFam" id="3.40.1010.10:FF:000001">
    <property type="entry name" value="Siroheme synthase"/>
    <property type="match status" value="1"/>
</dbReference>
<dbReference type="Gene3D" id="3.40.1010.10">
    <property type="entry name" value="Cobalt-precorrin-4 Transmethylase, Domain 1"/>
    <property type="match status" value="1"/>
</dbReference>
<dbReference type="Gene3D" id="3.30.950.10">
    <property type="entry name" value="Methyltransferase, Cobalt-precorrin-4 Transmethylase, Domain 2"/>
    <property type="match status" value="1"/>
</dbReference>
<dbReference type="InterPro" id="IPR000878">
    <property type="entry name" value="4pyrrol_Mease"/>
</dbReference>
<dbReference type="InterPro" id="IPR035996">
    <property type="entry name" value="4pyrrol_Methylase_sf"/>
</dbReference>
<dbReference type="InterPro" id="IPR014777">
    <property type="entry name" value="4pyrrole_Mease_sub1"/>
</dbReference>
<dbReference type="InterPro" id="IPR014776">
    <property type="entry name" value="4pyrrole_Mease_sub2"/>
</dbReference>
<dbReference type="InterPro" id="IPR006366">
    <property type="entry name" value="CobA/CysG_C"/>
</dbReference>
<dbReference type="InterPro" id="IPR050161">
    <property type="entry name" value="Siro_Cobalamin_biosynth"/>
</dbReference>
<dbReference type="InterPro" id="IPR003043">
    <property type="entry name" value="Uropor_MeTrfase_CS"/>
</dbReference>
<dbReference type="NCBIfam" id="TIGR01469">
    <property type="entry name" value="cobA_cysG_Cterm"/>
    <property type="match status" value="1"/>
</dbReference>
<dbReference type="NCBIfam" id="NF004790">
    <property type="entry name" value="PRK06136.1"/>
    <property type="match status" value="1"/>
</dbReference>
<dbReference type="PANTHER" id="PTHR45790:SF3">
    <property type="entry name" value="S-ADENOSYL-L-METHIONINE-DEPENDENT UROPORPHYRINOGEN III METHYLTRANSFERASE, CHLOROPLASTIC"/>
    <property type="match status" value="1"/>
</dbReference>
<dbReference type="PANTHER" id="PTHR45790">
    <property type="entry name" value="SIROHEME SYNTHASE-RELATED"/>
    <property type="match status" value="1"/>
</dbReference>
<dbReference type="Pfam" id="PF00590">
    <property type="entry name" value="TP_methylase"/>
    <property type="match status" value="1"/>
</dbReference>
<dbReference type="SUPFAM" id="SSF53790">
    <property type="entry name" value="Tetrapyrrole methylase"/>
    <property type="match status" value="1"/>
</dbReference>
<dbReference type="PROSITE" id="PS00839">
    <property type="entry name" value="SUMT_1"/>
    <property type="match status" value="1"/>
</dbReference>
<dbReference type="PROSITE" id="PS00840">
    <property type="entry name" value="SUMT_2"/>
    <property type="match status" value="1"/>
</dbReference>
<protein>
    <recommendedName>
        <fullName evidence="5">Uroporphyrinogen-III C-methyltransferase</fullName>
        <shortName>Urogen III methylase</shortName>
        <ecNumber evidence="2">2.1.1.107</ecNumber>
    </recommendedName>
    <alternativeName>
        <fullName evidence="3">S-adenosyl-L-methionine:uroporphyrinogen III methyltransferase</fullName>
        <shortName evidence="3">SUMT</shortName>
    </alternativeName>
    <alternativeName>
        <fullName>Uroporphyrinogen III methylase</fullName>
        <shortName>UROM</shortName>
    </alternativeName>
</protein>
<evidence type="ECO:0000250" key="1">
    <source>
        <dbReference type="UniProtKB" id="P21631"/>
    </source>
</evidence>
<evidence type="ECO:0000269" key="2">
    <source>
    </source>
</evidence>
<evidence type="ECO:0000303" key="3">
    <source>
    </source>
</evidence>
<evidence type="ECO:0000305" key="4"/>
<evidence type="ECO:0000305" key="5">
    <source>
    </source>
</evidence>
<name>SUMT_METIV</name>
<feature type="initiator methionine" description="Removed" evidence="2">
    <location>
        <position position="1"/>
    </location>
</feature>
<feature type="chain" id="PRO_0000150370" description="Uroporphyrinogen-III C-methyltransferase">
    <location>
        <begin position="2"/>
        <end position="231"/>
    </location>
</feature>
<feature type="binding site" evidence="1">
    <location>
        <position position="10"/>
    </location>
    <ligand>
        <name>S-adenosyl-L-homocysteine</name>
        <dbReference type="ChEBI" id="CHEBI:57856"/>
    </ligand>
</feature>
<feature type="binding site" evidence="1">
    <location>
        <begin position="85"/>
        <end position="87"/>
    </location>
    <ligand>
        <name>S-adenosyl-L-homocysteine</name>
        <dbReference type="ChEBI" id="CHEBI:57856"/>
    </ligand>
</feature>
<feature type="binding site" evidence="1">
    <location>
        <begin position="115"/>
        <end position="116"/>
    </location>
    <ligand>
        <name>S-adenosyl-L-homocysteine</name>
        <dbReference type="ChEBI" id="CHEBI:57856"/>
    </ligand>
</feature>
<feature type="binding site" evidence="1">
    <location>
        <position position="166"/>
    </location>
    <ligand>
        <name>S-adenosyl-L-homocysteine</name>
        <dbReference type="ChEBI" id="CHEBI:57856"/>
    </ligand>
</feature>
<feature type="binding site" evidence="1">
    <location>
        <position position="218"/>
    </location>
    <ligand>
        <name>S-adenosyl-L-homocysteine</name>
        <dbReference type="ChEBI" id="CHEBI:57856"/>
    </ligand>
</feature>
<sequence length="231" mass="24916">MVVYLVGAGPGDPELITLKAVNVLKKADVVLYDKPANEEILKYAEGAKLIYVGKQAGHHYKSQNEINTLLVEEAKENDLVVRLKGGDPFVFGRGGEEILALVEEGIDFELVPGVTSAIGVPTTIGLPVTHRGVATSFTVVTGHEDPTKCKKQVGWDFKADTIVILMGIGNLAENTAEIMKHKDPETPVCVIENGTMEGQRIITGTLENIAGKDIKPPALVVLEMLSMFLKK</sequence>
<proteinExistence type="evidence at protein level"/>
<organism>
    <name type="scientific">Methanobacterium ivanovii</name>
    <dbReference type="NCBI Taxonomy" id="2163"/>
    <lineage>
        <taxon>Archaea</taxon>
        <taxon>Methanobacteriati</taxon>
        <taxon>Methanobacteriota</taxon>
        <taxon>Methanomada group</taxon>
        <taxon>Methanobacteria</taxon>
        <taxon>Methanobacteriales</taxon>
        <taxon>Methanobacteriaceae</taxon>
        <taxon>Methanobacterium</taxon>
    </lineage>
</organism>
<keyword id="KW-0169">Cobalamin biosynthesis</keyword>
<keyword id="KW-0903">Direct protein sequencing</keyword>
<keyword id="KW-0489">Methyltransferase</keyword>
<keyword id="KW-0627">Porphyrin biosynthesis</keyword>
<keyword id="KW-0949">S-adenosyl-L-methionine</keyword>
<keyword id="KW-0808">Transferase</keyword>
<reference key="1">
    <citation type="journal article" date="1991" name="J. Bacteriol.">
        <title>Purification, characterization, and molecular cloning of S-adenosyl-L-methionine: uroporphyrinogen III methyltransferase from Methanobacterium ivanovii.</title>
        <authorList>
            <person name="Blanche F."/>
            <person name="Robin C."/>
            <person name="Couder M."/>
            <person name="Faucher D."/>
            <person name="Cauchois L."/>
            <person name="Cameron B."/>
            <person name="Crouzet J."/>
        </authorList>
    </citation>
    <scope>NUCLEOTIDE SEQUENCE [GENOMIC DNA]</scope>
    <scope>PROTEIN SEQUENCE OF 2-31 AND 201-212</scope>
    <scope>FUNCTION</scope>
    <scope>CATALYTIC ACTIVITY</scope>
    <scope>BIOPHYSICOCHEMICAL PROPERTIES</scope>
    <scope>ACTIVITY REGULATION</scope>
    <scope>SUBUNIT</scope>
    <scope>PATHWAY</scope>
    <source>
        <strain>DSM 2611</strain>
    </source>
</reference>
<gene>
    <name type="primary">cobA</name>
    <name evidence="3" type="synonym">corA</name>
</gene>
<accession>P29564</accession>
<comment type="function">
    <text evidence="2">Catalyzes the two successive C-2 and C-7 methylation reactions involved in the conversion of uroporphyrinogen III to precorrin-2 via the intermediate formation of precorrin-1. It is a step in the biosynthesis of both cobalamin (vitamin B12) and coenzyme F430.</text>
</comment>
<comment type="catalytic activity">
    <reaction evidence="2">
        <text>uroporphyrinogen III + 2 S-adenosyl-L-methionine = precorrin-2 + 2 S-adenosyl-L-homocysteine + H(+)</text>
        <dbReference type="Rhea" id="RHEA:32459"/>
        <dbReference type="ChEBI" id="CHEBI:15378"/>
        <dbReference type="ChEBI" id="CHEBI:57308"/>
        <dbReference type="ChEBI" id="CHEBI:57856"/>
        <dbReference type="ChEBI" id="CHEBI:58827"/>
        <dbReference type="ChEBI" id="CHEBI:59789"/>
        <dbReference type="EC" id="2.1.1.107"/>
    </reaction>
    <physiologicalReaction direction="left-to-right" evidence="5">
        <dbReference type="Rhea" id="RHEA:32460"/>
    </physiologicalReaction>
</comment>
<comment type="catalytic activity">
    <reaction evidence="2">
        <text>uroporphyrinogen III + S-adenosyl-L-methionine = precorrin-1 + S-adenosyl-L-homocysteine + H(+)</text>
        <dbReference type="Rhea" id="RHEA:19089"/>
        <dbReference type="ChEBI" id="CHEBI:15378"/>
        <dbReference type="ChEBI" id="CHEBI:57308"/>
        <dbReference type="ChEBI" id="CHEBI:57856"/>
        <dbReference type="ChEBI" id="CHEBI:58893"/>
        <dbReference type="ChEBI" id="CHEBI:59789"/>
    </reaction>
    <physiologicalReaction direction="left-to-right" evidence="5">
        <dbReference type="Rhea" id="RHEA:19090"/>
    </physiologicalReaction>
</comment>
<comment type="catalytic activity">
    <reaction evidence="2">
        <text>precorrin-1 + S-adenosyl-L-methionine = precorrin-2 + S-adenosyl-L-homocysteine</text>
        <dbReference type="Rhea" id="RHEA:21972"/>
        <dbReference type="ChEBI" id="CHEBI:57856"/>
        <dbReference type="ChEBI" id="CHEBI:58827"/>
        <dbReference type="ChEBI" id="CHEBI:58893"/>
        <dbReference type="ChEBI" id="CHEBI:59789"/>
    </reaction>
    <physiologicalReaction direction="left-to-right" evidence="5">
        <dbReference type="Rhea" id="RHEA:21973"/>
    </physiologicalReaction>
</comment>
<comment type="activity regulation">
    <text evidence="2">Does not show substrate inhibition at uroporphyrinogen III concentrations of up to 20 uM, in contrast to SUMT from Sinorhizobium (previously believed to be P.denitrificans).</text>
</comment>
<comment type="biophysicochemical properties">
    <kinetics>
        <KM evidence="2">52 nM for uroporphyrinogen III</KM>
        <Vmax evidence="2">1537.0 umol/min/mg enzyme</Vmax>
    </kinetics>
</comment>
<comment type="pathway">
    <text evidence="5">Cofactor biosynthesis; adenosylcobalamin biosynthesis; precorrin-2 from uroporphyrinogen III: step 1/1.</text>
</comment>
<comment type="subunit">
    <text evidence="2">Homodimer.</text>
</comment>
<comment type="similarity">
    <text evidence="4">Belongs to the precorrin methyltransferase family.</text>
</comment>